<protein>
    <recommendedName>
        <fullName evidence="1">Hydroxyethylthiazole kinase</fullName>
        <ecNumber evidence="1">2.7.1.50</ecNumber>
    </recommendedName>
    <alternativeName>
        <fullName evidence="1">4-methyl-5-beta-hydroxyethylthiazole kinase</fullName>
        <shortName evidence="1">TH kinase</shortName>
        <shortName evidence="1">Thz kinase</shortName>
    </alternativeName>
</protein>
<name>THIM_STAEQ</name>
<accession>Q5HMC9</accession>
<proteinExistence type="inferred from homology"/>
<dbReference type="EC" id="2.7.1.50" evidence="1"/>
<dbReference type="EMBL" id="CP000029">
    <property type="protein sequence ID" value="AAW55077.1"/>
    <property type="molecule type" value="Genomic_DNA"/>
</dbReference>
<dbReference type="RefSeq" id="WP_001829971.1">
    <property type="nucleotide sequence ID" value="NC_002976.3"/>
</dbReference>
<dbReference type="SMR" id="Q5HMC9"/>
<dbReference type="STRING" id="176279.SERP1699"/>
<dbReference type="KEGG" id="ser:SERP1699"/>
<dbReference type="eggNOG" id="COG2145">
    <property type="taxonomic scope" value="Bacteria"/>
</dbReference>
<dbReference type="HOGENOM" id="CLU_019943_0_2_9"/>
<dbReference type="UniPathway" id="UPA00060">
    <property type="reaction ID" value="UER00139"/>
</dbReference>
<dbReference type="Proteomes" id="UP000000531">
    <property type="component" value="Chromosome"/>
</dbReference>
<dbReference type="GO" id="GO:0005524">
    <property type="term" value="F:ATP binding"/>
    <property type="evidence" value="ECO:0007669"/>
    <property type="project" value="UniProtKB-UniRule"/>
</dbReference>
<dbReference type="GO" id="GO:0004417">
    <property type="term" value="F:hydroxyethylthiazole kinase activity"/>
    <property type="evidence" value="ECO:0007669"/>
    <property type="project" value="UniProtKB-UniRule"/>
</dbReference>
<dbReference type="GO" id="GO:0000287">
    <property type="term" value="F:magnesium ion binding"/>
    <property type="evidence" value="ECO:0007669"/>
    <property type="project" value="UniProtKB-UniRule"/>
</dbReference>
<dbReference type="GO" id="GO:0009228">
    <property type="term" value="P:thiamine biosynthetic process"/>
    <property type="evidence" value="ECO:0007669"/>
    <property type="project" value="UniProtKB-KW"/>
</dbReference>
<dbReference type="GO" id="GO:0009229">
    <property type="term" value="P:thiamine diphosphate biosynthetic process"/>
    <property type="evidence" value="ECO:0007669"/>
    <property type="project" value="UniProtKB-UniRule"/>
</dbReference>
<dbReference type="CDD" id="cd01170">
    <property type="entry name" value="THZ_kinase"/>
    <property type="match status" value="1"/>
</dbReference>
<dbReference type="Gene3D" id="3.40.1190.20">
    <property type="match status" value="1"/>
</dbReference>
<dbReference type="HAMAP" id="MF_00228">
    <property type="entry name" value="Thz_kinase"/>
    <property type="match status" value="1"/>
</dbReference>
<dbReference type="InterPro" id="IPR000417">
    <property type="entry name" value="Hyethyz_kinase"/>
</dbReference>
<dbReference type="InterPro" id="IPR029056">
    <property type="entry name" value="Ribokinase-like"/>
</dbReference>
<dbReference type="NCBIfam" id="NF006830">
    <property type="entry name" value="PRK09355.1"/>
    <property type="match status" value="1"/>
</dbReference>
<dbReference type="NCBIfam" id="TIGR00694">
    <property type="entry name" value="thiM"/>
    <property type="match status" value="1"/>
</dbReference>
<dbReference type="Pfam" id="PF02110">
    <property type="entry name" value="HK"/>
    <property type="match status" value="1"/>
</dbReference>
<dbReference type="PIRSF" id="PIRSF000513">
    <property type="entry name" value="Thz_kinase"/>
    <property type="match status" value="1"/>
</dbReference>
<dbReference type="PRINTS" id="PR01099">
    <property type="entry name" value="HYETHTZKNASE"/>
</dbReference>
<dbReference type="SUPFAM" id="SSF53613">
    <property type="entry name" value="Ribokinase-like"/>
    <property type="match status" value="1"/>
</dbReference>
<keyword id="KW-0067">ATP-binding</keyword>
<keyword id="KW-0418">Kinase</keyword>
<keyword id="KW-0460">Magnesium</keyword>
<keyword id="KW-0479">Metal-binding</keyword>
<keyword id="KW-0547">Nucleotide-binding</keyword>
<keyword id="KW-1185">Reference proteome</keyword>
<keyword id="KW-0784">Thiamine biosynthesis</keyword>
<keyword id="KW-0808">Transferase</keyword>
<comment type="function">
    <text evidence="1">Catalyzes the phosphorylation of the hydroxyl group of 4-methyl-5-beta-hydroxyethylthiazole (THZ).</text>
</comment>
<comment type="catalytic activity">
    <reaction evidence="1">
        <text>5-(2-hydroxyethyl)-4-methylthiazole + ATP = 4-methyl-5-(2-phosphooxyethyl)-thiazole + ADP + H(+)</text>
        <dbReference type="Rhea" id="RHEA:24212"/>
        <dbReference type="ChEBI" id="CHEBI:15378"/>
        <dbReference type="ChEBI" id="CHEBI:17957"/>
        <dbReference type="ChEBI" id="CHEBI:30616"/>
        <dbReference type="ChEBI" id="CHEBI:58296"/>
        <dbReference type="ChEBI" id="CHEBI:456216"/>
        <dbReference type="EC" id="2.7.1.50"/>
    </reaction>
</comment>
<comment type="cofactor">
    <cofactor evidence="1">
        <name>Mg(2+)</name>
        <dbReference type="ChEBI" id="CHEBI:18420"/>
    </cofactor>
</comment>
<comment type="pathway">
    <text evidence="1">Cofactor biosynthesis; thiamine diphosphate biosynthesis; 4-methyl-5-(2-phosphoethyl)-thiazole from 5-(2-hydroxyethyl)-4-methylthiazole: step 1/1.</text>
</comment>
<comment type="similarity">
    <text evidence="1">Belongs to the Thz kinase family.</text>
</comment>
<reference key="1">
    <citation type="journal article" date="2005" name="J. Bacteriol.">
        <title>Insights on evolution of virulence and resistance from the complete genome analysis of an early methicillin-resistant Staphylococcus aureus strain and a biofilm-producing methicillin-resistant Staphylococcus epidermidis strain.</title>
        <authorList>
            <person name="Gill S.R."/>
            <person name="Fouts D.E."/>
            <person name="Archer G.L."/>
            <person name="Mongodin E.F."/>
            <person name="DeBoy R.T."/>
            <person name="Ravel J."/>
            <person name="Paulsen I.T."/>
            <person name="Kolonay J.F."/>
            <person name="Brinkac L.M."/>
            <person name="Beanan M.J."/>
            <person name="Dodson R.J."/>
            <person name="Daugherty S.C."/>
            <person name="Madupu R."/>
            <person name="Angiuoli S.V."/>
            <person name="Durkin A.S."/>
            <person name="Haft D.H."/>
            <person name="Vamathevan J.J."/>
            <person name="Khouri H."/>
            <person name="Utterback T.R."/>
            <person name="Lee C."/>
            <person name="Dimitrov G."/>
            <person name="Jiang L."/>
            <person name="Qin H."/>
            <person name="Weidman J."/>
            <person name="Tran K."/>
            <person name="Kang K.H."/>
            <person name="Hance I.R."/>
            <person name="Nelson K.E."/>
            <person name="Fraser C.M."/>
        </authorList>
    </citation>
    <scope>NUCLEOTIDE SEQUENCE [LARGE SCALE GENOMIC DNA]</scope>
    <source>
        <strain>ATCC 35984 / DSM 28319 / BCRC 17069 / CCUG 31568 / BM 3577 / RP62A</strain>
    </source>
</reference>
<evidence type="ECO:0000255" key="1">
    <source>
        <dbReference type="HAMAP-Rule" id="MF_00228"/>
    </source>
</evidence>
<feature type="chain" id="PRO_0000156959" description="Hydroxyethylthiazole kinase">
    <location>
        <begin position="1"/>
        <end position="262"/>
    </location>
</feature>
<feature type="binding site" evidence="1">
    <location>
        <position position="39"/>
    </location>
    <ligand>
        <name>substrate</name>
    </ligand>
</feature>
<feature type="binding site" evidence="1">
    <location>
        <position position="115"/>
    </location>
    <ligand>
        <name>ATP</name>
        <dbReference type="ChEBI" id="CHEBI:30616"/>
    </ligand>
</feature>
<feature type="binding site" evidence="1">
    <location>
        <position position="160"/>
    </location>
    <ligand>
        <name>ATP</name>
        <dbReference type="ChEBI" id="CHEBI:30616"/>
    </ligand>
</feature>
<feature type="binding site" evidence="1">
    <location>
        <position position="187"/>
    </location>
    <ligand>
        <name>substrate</name>
    </ligand>
</feature>
<gene>
    <name evidence="1" type="primary">thiM</name>
    <name type="ordered locus">SERP1699</name>
</gene>
<sequence>MNNLERLRSENPLVICYTNDVVKNFTANGLLSLGASPAMSEAPEEAEDFTRMASALLINIGTLTRENEEDIIKIGKIANQQGTPIVFDPVAVGASTYRKNFCQRFLGEVNVTVIKGNASEILTLIDFNTTMKGTDSDSELDSVNIAKKAANTLNTAIVITGKDDIIAKNEKIIKLSNGSPLLTKITGAGCLLGGVLASFLFRNTQPSIDLLVEAVSVYNIAAEFAEQAPHVNGPGTFLSELLDQLYQMNDITYKNQVKKVEI</sequence>
<organism>
    <name type="scientific">Staphylococcus epidermidis (strain ATCC 35984 / DSM 28319 / BCRC 17069 / CCUG 31568 / BM 3577 / RP62A)</name>
    <dbReference type="NCBI Taxonomy" id="176279"/>
    <lineage>
        <taxon>Bacteria</taxon>
        <taxon>Bacillati</taxon>
        <taxon>Bacillota</taxon>
        <taxon>Bacilli</taxon>
        <taxon>Bacillales</taxon>
        <taxon>Staphylococcaceae</taxon>
        <taxon>Staphylococcus</taxon>
    </lineage>
</organism>